<gene>
    <name evidence="1" type="primary">rpsN</name>
    <name type="ordered locus">SP_0222</name>
</gene>
<dbReference type="EMBL" id="AE005672">
    <property type="protein sequence ID" value="AAK74402.1"/>
    <property type="molecule type" value="Genomic_DNA"/>
</dbReference>
<dbReference type="PIR" id="A95026">
    <property type="entry name" value="A95026"/>
</dbReference>
<dbReference type="RefSeq" id="WP_001085703.1">
    <property type="nucleotide sequence ID" value="NZ_CP155539.1"/>
</dbReference>
<dbReference type="SMR" id="P66419"/>
<dbReference type="PaxDb" id="170187-SP_0222"/>
<dbReference type="EnsemblBacteria" id="AAK74402">
    <property type="protein sequence ID" value="AAK74402"/>
    <property type="gene ID" value="SP_0222"/>
</dbReference>
<dbReference type="GeneID" id="45652296"/>
<dbReference type="KEGG" id="spn:SP_0222"/>
<dbReference type="eggNOG" id="COG0199">
    <property type="taxonomic scope" value="Bacteria"/>
</dbReference>
<dbReference type="PhylomeDB" id="P66419"/>
<dbReference type="BioCyc" id="SPNE170187:G1FZB-227-MONOMER"/>
<dbReference type="Proteomes" id="UP000000585">
    <property type="component" value="Chromosome"/>
</dbReference>
<dbReference type="GO" id="GO:0005737">
    <property type="term" value="C:cytoplasm"/>
    <property type="evidence" value="ECO:0007669"/>
    <property type="project" value="UniProtKB-ARBA"/>
</dbReference>
<dbReference type="GO" id="GO:0015935">
    <property type="term" value="C:small ribosomal subunit"/>
    <property type="evidence" value="ECO:0007669"/>
    <property type="project" value="TreeGrafter"/>
</dbReference>
<dbReference type="GO" id="GO:0019843">
    <property type="term" value="F:rRNA binding"/>
    <property type="evidence" value="ECO:0007669"/>
    <property type="project" value="UniProtKB-UniRule"/>
</dbReference>
<dbReference type="GO" id="GO:0003735">
    <property type="term" value="F:structural constituent of ribosome"/>
    <property type="evidence" value="ECO:0007669"/>
    <property type="project" value="InterPro"/>
</dbReference>
<dbReference type="GO" id="GO:0006412">
    <property type="term" value="P:translation"/>
    <property type="evidence" value="ECO:0007669"/>
    <property type="project" value="UniProtKB-UniRule"/>
</dbReference>
<dbReference type="FunFam" id="4.10.830.10:FF:000003">
    <property type="entry name" value="30S ribosomal protein S14"/>
    <property type="match status" value="1"/>
</dbReference>
<dbReference type="Gene3D" id="4.10.830.10">
    <property type="entry name" value="30s Ribosomal Protein S14, Chain N"/>
    <property type="match status" value="1"/>
</dbReference>
<dbReference type="HAMAP" id="MF_00537">
    <property type="entry name" value="Ribosomal_uS14_1"/>
    <property type="match status" value="1"/>
</dbReference>
<dbReference type="InterPro" id="IPR001209">
    <property type="entry name" value="Ribosomal_uS14"/>
</dbReference>
<dbReference type="InterPro" id="IPR023036">
    <property type="entry name" value="Ribosomal_uS14_bac/plastid"/>
</dbReference>
<dbReference type="InterPro" id="IPR018271">
    <property type="entry name" value="Ribosomal_uS14_CS"/>
</dbReference>
<dbReference type="InterPro" id="IPR043140">
    <property type="entry name" value="Ribosomal_uS14_sf"/>
</dbReference>
<dbReference type="NCBIfam" id="NF006477">
    <property type="entry name" value="PRK08881.1"/>
    <property type="match status" value="1"/>
</dbReference>
<dbReference type="PANTHER" id="PTHR19836">
    <property type="entry name" value="30S RIBOSOMAL PROTEIN S14"/>
    <property type="match status" value="1"/>
</dbReference>
<dbReference type="PANTHER" id="PTHR19836:SF19">
    <property type="entry name" value="SMALL RIBOSOMAL SUBUNIT PROTEIN US14M"/>
    <property type="match status" value="1"/>
</dbReference>
<dbReference type="Pfam" id="PF00253">
    <property type="entry name" value="Ribosomal_S14"/>
    <property type="match status" value="1"/>
</dbReference>
<dbReference type="SUPFAM" id="SSF57716">
    <property type="entry name" value="Glucocorticoid receptor-like (DNA-binding domain)"/>
    <property type="match status" value="1"/>
</dbReference>
<dbReference type="PROSITE" id="PS00527">
    <property type="entry name" value="RIBOSOMAL_S14"/>
    <property type="match status" value="1"/>
</dbReference>
<feature type="chain" id="PRO_0000130941" description="Small ribosomal subunit protein uS14">
    <location>
        <begin position="1"/>
        <end position="89"/>
    </location>
</feature>
<reference key="1">
    <citation type="journal article" date="2001" name="Science">
        <title>Complete genome sequence of a virulent isolate of Streptococcus pneumoniae.</title>
        <authorList>
            <person name="Tettelin H."/>
            <person name="Nelson K.E."/>
            <person name="Paulsen I.T."/>
            <person name="Eisen J.A."/>
            <person name="Read T.D."/>
            <person name="Peterson S.N."/>
            <person name="Heidelberg J.F."/>
            <person name="DeBoy R.T."/>
            <person name="Haft D.H."/>
            <person name="Dodson R.J."/>
            <person name="Durkin A.S."/>
            <person name="Gwinn M.L."/>
            <person name="Kolonay J.F."/>
            <person name="Nelson W.C."/>
            <person name="Peterson J.D."/>
            <person name="Umayam L.A."/>
            <person name="White O."/>
            <person name="Salzberg S.L."/>
            <person name="Lewis M.R."/>
            <person name="Radune D."/>
            <person name="Holtzapple E.K."/>
            <person name="Khouri H.M."/>
            <person name="Wolf A.M."/>
            <person name="Utterback T.R."/>
            <person name="Hansen C.L."/>
            <person name="McDonald L.A."/>
            <person name="Feldblyum T.V."/>
            <person name="Angiuoli S.V."/>
            <person name="Dickinson T."/>
            <person name="Hickey E.K."/>
            <person name="Holt I.E."/>
            <person name="Loftus B.J."/>
            <person name="Yang F."/>
            <person name="Smith H.O."/>
            <person name="Venter J.C."/>
            <person name="Dougherty B.A."/>
            <person name="Morrison D.A."/>
            <person name="Hollingshead S.K."/>
            <person name="Fraser C.M."/>
        </authorList>
    </citation>
    <scope>NUCLEOTIDE SEQUENCE [LARGE SCALE GENOMIC DNA]</scope>
    <source>
        <strain>ATCC BAA-334 / TIGR4</strain>
    </source>
</reference>
<accession>P66419</accession>
<accession>Q97SV0</accession>
<evidence type="ECO:0000255" key="1">
    <source>
        <dbReference type="HAMAP-Rule" id="MF_00537"/>
    </source>
</evidence>
<evidence type="ECO:0000305" key="2"/>
<protein>
    <recommendedName>
        <fullName evidence="1">Small ribosomal subunit protein uS14</fullName>
    </recommendedName>
    <alternativeName>
        <fullName evidence="2">30S ribosomal protein S14</fullName>
    </alternativeName>
</protein>
<proteinExistence type="inferred from homology"/>
<name>RS14_STRPN</name>
<comment type="function">
    <text evidence="1">Binds 16S rRNA, required for the assembly of 30S particles and may also be responsible for determining the conformation of the 16S rRNA at the A site.</text>
</comment>
<comment type="subunit">
    <text evidence="1">Part of the 30S ribosomal subunit. Contacts proteins S3 and S10.</text>
</comment>
<comment type="similarity">
    <text evidence="1">Belongs to the universal ribosomal protein uS14 family.</text>
</comment>
<keyword id="KW-1185">Reference proteome</keyword>
<keyword id="KW-0687">Ribonucleoprotein</keyword>
<keyword id="KW-0689">Ribosomal protein</keyword>
<keyword id="KW-0694">RNA-binding</keyword>
<keyword id="KW-0699">rRNA-binding</keyword>
<sequence>MAKKSMVAREAKRQKIVDRYAEKRAALKAAGDYEGLSKLPRNASPTRLHNRCRVTGRPHSVYRKFGLSRIAFRELAHKGQIPGVTKASW</sequence>
<organism>
    <name type="scientific">Streptococcus pneumoniae serotype 4 (strain ATCC BAA-334 / TIGR4)</name>
    <dbReference type="NCBI Taxonomy" id="170187"/>
    <lineage>
        <taxon>Bacteria</taxon>
        <taxon>Bacillati</taxon>
        <taxon>Bacillota</taxon>
        <taxon>Bacilli</taxon>
        <taxon>Lactobacillales</taxon>
        <taxon>Streptococcaceae</taxon>
        <taxon>Streptococcus</taxon>
    </lineage>
</organism>